<comment type="function">
    <text evidence="1">Specifically dimethylates two adjacent adenosines (A1518 and A1519) in the loop of a conserved hairpin near the 3'-end of 16S rRNA in the 30S particle. May play a critical role in biogenesis of 30S subunits.</text>
</comment>
<comment type="catalytic activity">
    <reaction evidence="1">
        <text>adenosine(1518)/adenosine(1519) in 16S rRNA + 4 S-adenosyl-L-methionine = N(6)-dimethyladenosine(1518)/N(6)-dimethyladenosine(1519) in 16S rRNA + 4 S-adenosyl-L-homocysteine + 4 H(+)</text>
        <dbReference type="Rhea" id="RHEA:19609"/>
        <dbReference type="Rhea" id="RHEA-COMP:10232"/>
        <dbReference type="Rhea" id="RHEA-COMP:10233"/>
        <dbReference type="ChEBI" id="CHEBI:15378"/>
        <dbReference type="ChEBI" id="CHEBI:57856"/>
        <dbReference type="ChEBI" id="CHEBI:59789"/>
        <dbReference type="ChEBI" id="CHEBI:74411"/>
        <dbReference type="ChEBI" id="CHEBI:74493"/>
        <dbReference type="EC" id="2.1.1.182"/>
    </reaction>
</comment>
<comment type="subcellular location">
    <subcellularLocation>
        <location evidence="1">Cytoplasm</location>
    </subcellularLocation>
</comment>
<comment type="similarity">
    <text evidence="1">Belongs to the class I-like SAM-binding methyltransferase superfamily. rRNA adenine N(6)-methyltransferase family. RsmA subfamily.</text>
</comment>
<protein>
    <recommendedName>
        <fullName evidence="1">Ribosomal RNA small subunit methyltransferase A</fullName>
        <ecNumber evidence="1">2.1.1.182</ecNumber>
    </recommendedName>
    <alternativeName>
        <fullName evidence="1">16S rRNA (adenine(1518)-N(6)/adenine(1519)-N(6))-dimethyltransferase</fullName>
    </alternativeName>
    <alternativeName>
        <fullName evidence="1">16S rRNA dimethyladenosine transferase</fullName>
    </alternativeName>
    <alternativeName>
        <fullName evidence="1">16S rRNA dimethylase</fullName>
    </alternativeName>
    <alternativeName>
        <fullName evidence="1">S-adenosylmethionine-6-N', N'-adenosyl(rRNA) dimethyltransferase</fullName>
    </alternativeName>
</protein>
<keyword id="KW-0963">Cytoplasm</keyword>
<keyword id="KW-0489">Methyltransferase</keyword>
<keyword id="KW-1185">Reference proteome</keyword>
<keyword id="KW-0694">RNA-binding</keyword>
<keyword id="KW-0698">rRNA processing</keyword>
<keyword id="KW-0949">S-adenosyl-L-methionine</keyword>
<keyword id="KW-0808">Transferase</keyword>
<sequence>MPFSGHVPRKRFGQHWLRDDSILEKILLAADLQEEDRILEIGPGRGALTEKLLESNVKLVHGVELDAELIVGLKQRFAGQSRFTLQEGDALSVSLLPHDGIAANKVVANIPYNITGPLLERLIGRLGRSSEVKYQRLVLLVQKEVAKRILALPGQSSFSAMSVRLQLLAKCQSVCEVHPSSFSPQPKVYSEVIILDPLEKDERLDFLVERRVASIVQIAFLSRRKKLRNTLTKICPLDELEPLAYRQGINLNQRPQELAPMIWVQLARELERWDRSKKK</sequence>
<proteinExistence type="inferred from homology"/>
<feature type="chain" id="PRO_0000101583" description="Ribosomal RNA small subunit methyltransferase A">
    <location>
        <begin position="1"/>
        <end position="279"/>
    </location>
</feature>
<feature type="binding site" evidence="1">
    <location>
        <position position="15"/>
    </location>
    <ligand>
        <name>S-adenosyl-L-methionine</name>
        <dbReference type="ChEBI" id="CHEBI:59789"/>
    </ligand>
</feature>
<feature type="binding site" evidence="1">
    <location>
        <position position="17"/>
    </location>
    <ligand>
        <name>S-adenosyl-L-methionine</name>
        <dbReference type="ChEBI" id="CHEBI:59789"/>
    </ligand>
</feature>
<feature type="binding site" evidence="1">
    <location>
        <position position="42"/>
    </location>
    <ligand>
        <name>S-adenosyl-L-methionine</name>
        <dbReference type="ChEBI" id="CHEBI:59789"/>
    </ligand>
</feature>
<feature type="binding site" evidence="1">
    <location>
        <position position="64"/>
    </location>
    <ligand>
        <name>S-adenosyl-L-methionine</name>
        <dbReference type="ChEBI" id="CHEBI:59789"/>
    </ligand>
</feature>
<feature type="binding site" evidence="1">
    <location>
        <position position="89"/>
    </location>
    <ligand>
        <name>S-adenosyl-L-methionine</name>
        <dbReference type="ChEBI" id="CHEBI:59789"/>
    </ligand>
</feature>
<feature type="binding site" evidence="1">
    <location>
        <position position="109"/>
    </location>
    <ligand>
        <name>S-adenosyl-L-methionine</name>
        <dbReference type="ChEBI" id="CHEBI:59789"/>
    </ligand>
</feature>
<organism>
    <name type="scientific">Prochlorococcus marinus (strain SARG / CCMP1375 / SS120)</name>
    <dbReference type="NCBI Taxonomy" id="167539"/>
    <lineage>
        <taxon>Bacteria</taxon>
        <taxon>Bacillati</taxon>
        <taxon>Cyanobacteriota</taxon>
        <taxon>Cyanophyceae</taxon>
        <taxon>Synechococcales</taxon>
        <taxon>Prochlorococcaceae</taxon>
        <taxon>Prochlorococcus</taxon>
    </lineage>
</organism>
<reference key="1">
    <citation type="journal article" date="2003" name="Proc. Natl. Acad. Sci. U.S.A.">
        <title>Genome sequence of the cyanobacterium Prochlorococcus marinus SS120, a nearly minimal oxyphototrophic genome.</title>
        <authorList>
            <person name="Dufresne A."/>
            <person name="Salanoubat M."/>
            <person name="Partensky F."/>
            <person name="Artiguenave F."/>
            <person name="Axmann I.M."/>
            <person name="Barbe V."/>
            <person name="Duprat S."/>
            <person name="Galperin M.Y."/>
            <person name="Koonin E.V."/>
            <person name="Le Gall F."/>
            <person name="Makarova K.S."/>
            <person name="Ostrowski M."/>
            <person name="Oztas S."/>
            <person name="Robert C."/>
            <person name="Rogozin I.B."/>
            <person name="Scanlan D.J."/>
            <person name="Tandeau de Marsac N."/>
            <person name="Weissenbach J."/>
            <person name="Wincker P."/>
            <person name="Wolf Y.I."/>
            <person name="Hess W.R."/>
        </authorList>
    </citation>
    <scope>NUCLEOTIDE SEQUENCE [LARGE SCALE GENOMIC DNA]</scope>
    <source>
        <strain>SARG / CCMP1375 / SS120</strain>
    </source>
</reference>
<evidence type="ECO:0000255" key="1">
    <source>
        <dbReference type="HAMAP-Rule" id="MF_00607"/>
    </source>
</evidence>
<name>RSMA_PROMA</name>
<accession>Q7VCH7</accession>
<gene>
    <name evidence="1" type="primary">rsmA</name>
    <name evidence="1" type="synonym">ksgA</name>
    <name type="ordered locus">Pro_0763</name>
</gene>
<dbReference type="EC" id="2.1.1.182" evidence="1"/>
<dbReference type="EMBL" id="AE017126">
    <property type="protein sequence ID" value="AAP99807.1"/>
    <property type="molecule type" value="Genomic_DNA"/>
</dbReference>
<dbReference type="RefSeq" id="NP_875155.1">
    <property type="nucleotide sequence ID" value="NC_005042.1"/>
</dbReference>
<dbReference type="RefSeq" id="WP_011124915.1">
    <property type="nucleotide sequence ID" value="NC_005042.1"/>
</dbReference>
<dbReference type="SMR" id="Q7VCH7"/>
<dbReference type="STRING" id="167539.Pro_0763"/>
<dbReference type="EnsemblBacteria" id="AAP99807">
    <property type="protein sequence ID" value="AAP99807"/>
    <property type="gene ID" value="Pro_0763"/>
</dbReference>
<dbReference type="KEGG" id="pma:Pro_0763"/>
<dbReference type="PATRIC" id="fig|167539.5.peg.807"/>
<dbReference type="eggNOG" id="COG0030">
    <property type="taxonomic scope" value="Bacteria"/>
</dbReference>
<dbReference type="HOGENOM" id="CLU_041220_0_1_3"/>
<dbReference type="OrthoDB" id="9814755at2"/>
<dbReference type="Proteomes" id="UP000001420">
    <property type="component" value="Chromosome"/>
</dbReference>
<dbReference type="GO" id="GO:0005829">
    <property type="term" value="C:cytosol"/>
    <property type="evidence" value="ECO:0007669"/>
    <property type="project" value="TreeGrafter"/>
</dbReference>
<dbReference type="GO" id="GO:0052908">
    <property type="term" value="F:16S rRNA (adenine(1518)-N(6)/adenine(1519)-N(6))-dimethyltransferase activity"/>
    <property type="evidence" value="ECO:0007669"/>
    <property type="project" value="UniProtKB-EC"/>
</dbReference>
<dbReference type="GO" id="GO:0003723">
    <property type="term" value="F:RNA binding"/>
    <property type="evidence" value="ECO:0007669"/>
    <property type="project" value="UniProtKB-KW"/>
</dbReference>
<dbReference type="CDD" id="cd02440">
    <property type="entry name" value="AdoMet_MTases"/>
    <property type="match status" value="1"/>
</dbReference>
<dbReference type="Gene3D" id="1.10.8.100">
    <property type="entry name" value="Ribosomal RNA adenine dimethylase-like, domain 2"/>
    <property type="match status" value="1"/>
</dbReference>
<dbReference type="Gene3D" id="3.40.50.150">
    <property type="entry name" value="Vaccinia Virus protein VP39"/>
    <property type="match status" value="1"/>
</dbReference>
<dbReference type="HAMAP" id="MF_00607">
    <property type="entry name" value="16SrRNA_methyltr_A"/>
    <property type="match status" value="1"/>
</dbReference>
<dbReference type="InterPro" id="IPR001737">
    <property type="entry name" value="KsgA/Erm"/>
</dbReference>
<dbReference type="InterPro" id="IPR023165">
    <property type="entry name" value="rRNA_Ade_diMease-like_C"/>
</dbReference>
<dbReference type="InterPro" id="IPR020596">
    <property type="entry name" value="rRNA_Ade_Mease_Trfase_CS"/>
</dbReference>
<dbReference type="InterPro" id="IPR020598">
    <property type="entry name" value="rRNA_Ade_methylase_Trfase_N"/>
</dbReference>
<dbReference type="InterPro" id="IPR011530">
    <property type="entry name" value="rRNA_adenine_dimethylase"/>
</dbReference>
<dbReference type="InterPro" id="IPR029063">
    <property type="entry name" value="SAM-dependent_MTases_sf"/>
</dbReference>
<dbReference type="NCBIfam" id="TIGR00755">
    <property type="entry name" value="ksgA"/>
    <property type="match status" value="1"/>
</dbReference>
<dbReference type="PANTHER" id="PTHR11727">
    <property type="entry name" value="DIMETHYLADENOSINE TRANSFERASE"/>
    <property type="match status" value="1"/>
</dbReference>
<dbReference type="PANTHER" id="PTHR11727:SF7">
    <property type="entry name" value="DIMETHYLADENOSINE TRANSFERASE-RELATED"/>
    <property type="match status" value="1"/>
</dbReference>
<dbReference type="Pfam" id="PF00398">
    <property type="entry name" value="RrnaAD"/>
    <property type="match status" value="1"/>
</dbReference>
<dbReference type="SMART" id="SM00650">
    <property type="entry name" value="rADc"/>
    <property type="match status" value="1"/>
</dbReference>
<dbReference type="SUPFAM" id="SSF53335">
    <property type="entry name" value="S-adenosyl-L-methionine-dependent methyltransferases"/>
    <property type="match status" value="1"/>
</dbReference>
<dbReference type="PROSITE" id="PS01131">
    <property type="entry name" value="RRNA_A_DIMETH"/>
    <property type="match status" value="1"/>
</dbReference>
<dbReference type="PROSITE" id="PS51689">
    <property type="entry name" value="SAM_RNA_A_N6_MT"/>
    <property type="match status" value="1"/>
</dbReference>